<feature type="chain" id="PRO_1000015353" description="Large-conductance mechanosensitive channel">
    <location>
        <begin position="1"/>
        <end position="146"/>
    </location>
</feature>
<feature type="transmembrane region" description="Helical" evidence="1">
    <location>
        <begin position="12"/>
        <end position="32"/>
    </location>
</feature>
<feature type="transmembrane region" description="Helical" evidence="1">
    <location>
        <begin position="83"/>
        <end position="103"/>
    </location>
</feature>
<gene>
    <name evidence="1" type="primary">mscL</name>
    <name type="ordered locus">BVU_3586</name>
</gene>
<reference key="1">
    <citation type="journal article" date="2007" name="PLoS Biol.">
        <title>Evolution of symbiotic bacteria in the distal human intestine.</title>
        <authorList>
            <person name="Xu J."/>
            <person name="Mahowald M.A."/>
            <person name="Ley R.E."/>
            <person name="Lozupone C.A."/>
            <person name="Hamady M."/>
            <person name="Martens E.C."/>
            <person name="Henrissat B."/>
            <person name="Coutinho P.M."/>
            <person name="Minx P."/>
            <person name="Latreille P."/>
            <person name="Cordum H."/>
            <person name="Van Brunt A."/>
            <person name="Kim K."/>
            <person name="Fulton R.S."/>
            <person name="Fulton L.A."/>
            <person name="Clifton S.W."/>
            <person name="Wilson R.K."/>
            <person name="Knight R.D."/>
            <person name="Gordon J.I."/>
        </authorList>
    </citation>
    <scope>NUCLEOTIDE SEQUENCE [LARGE SCALE GENOMIC DNA]</scope>
    <source>
        <strain>ATCC 8482 / DSM 1447 / JCM 5826 / CCUG 4940 / NBRC 14291 / NCTC 11154</strain>
    </source>
</reference>
<protein>
    <recommendedName>
        <fullName evidence="1">Large-conductance mechanosensitive channel</fullName>
    </recommendedName>
</protein>
<organism>
    <name type="scientific">Phocaeicola vulgatus (strain ATCC 8482 / DSM 1447 / JCM 5826 / CCUG 4940 / NBRC 14291 / NCTC 11154)</name>
    <name type="common">Bacteroides vulgatus</name>
    <dbReference type="NCBI Taxonomy" id="435590"/>
    <lineage>
        <taxon>Bacteria</taxon>
        <taxon>Pseudomonadati</taxon>
        <taxon>Bacteroidota</taxon>
        <taxon>Bacteroidia</taxon>
        <taxon>Bacteroidales</taxon>
        <taxon>Bacteroidaceae</taxon>
        <taxon>Phocaeicola</taxon>
    </lineage>
</organism>
<comment type="function">
    <text evidence="1">Channel that opens in response to stretch forces in the membrane lipid bilayer. May participate in the regulation of osmotic pressure changes within the cell.</text>
</comment>
<comment type="subunit">
    <text evidence="1">Homopentamer.</text>
</comment>
<comment type="subcellular location">
    <subcellularLocation>
        <location evidence="1">Cell inner membrane</location>
        <topology evidence="1">Multi-pass membrane protein</topology>
    </subcellularLocation>
</comment>
<comment type="similarity">
    <text evidence="1">Belongs to the MscL family.</text>
</comment>
<dbReference type="EMBL" id="CP000139">
    <property type="protein sequence ID" value="ABR41199.1"/>
    <property type="molecule type" value="Genomic_DNA"/>
</dbReference>
<dbReference type="RefSeq" id="WP_005839284.1">
    <property type="nucleotide sequence ID" value="NZ_JANSWM010000066.1"/>
</dbReference>
<dbReference type="SMR" id="A6L685"/>
<dbReference type="STRING" id="435590.BVU_3586"/>
<dbReference type="PaxDb" id="435590-BVU_3586"/>
<dbReference type="GeneID" id="5304546"/>
<dbReference type="KEGG" id="bvu:BVU_3586"/>
<dbReference type="eggNOG" id="COG1970">
    <property type="taxonomic scope" value="Bacteria"/>
</dbReference>
<dbReference type="HOGENOM" id="CLU_095787_0_0_10"/>
<dbReference type="BioCyc" id="BVUL435590:G1G59-3722-MONOMER"/>
<dbReference type="Proteomes" id="UP000002861">
    <property type="component" value="Chromosome"/>
</dbReference>
<dbReference type="GO" id="GO:0005886">
    <property type="term" value="C:plasma membrane"/>
    <property type="evidence" value="ECO:0007669"/>
    <property type="project" value="UniProtKB-SubCell"/>
</dbReference>
<dbReference type="GO" id="GO:0008381">
    <property type="term" value="F:mechanosensitive monoatomic ion channel activity"/>
    <property type="evidence" value="ECO:0007669"/>
    <property type="project" value="UniProtKB-UniRule"/>
</dbReference>
<dbReference type="FunFam" id="1.10.1200.120:FF:000001">
    <property type="entry name" value="Large-conductance mechanosensitive channel"/>
    <property type="match status" value="1"/>
</dbReference>
<dbReference type="Gene3D" id="1.10.1200.120">
    <property type="entry name" value="Large-conductance mechanosensitive channel, MscL, domain 1"/>
    <property type="match status" value="1"/>
</dbReference>
<dbReference type="HAMAP" id="MF_00115">
    <property type="entry name" value="MscL"/>
    <property type="match status" value="1"/>
</dbReference>
<dbReference type="InterPro" id="IPR019823">
    <property type="entry name" value="Mechanosensitive_channel_CS"/>
</dbReference>
<dbReference type="InterPro" id="IPR001185">
    <property type="entry name" value="MS_channel"/>
</dbReference>
<dbReference type="InterPro" id="IPR037673">
    <property type="entry name" value="MSC/AndL"/>
</dbReference>
<dbReference type="InterPro" id="IPR036019">
    <property type="entry name" value="MscL_channel"/>
</dbReference>
<dbReference type="NCBIfam" id="TIGR00220">
    <property type="entry name" value="mscL"/>
    <property type="match status" value="1"/>
</dbReference>
<dbReference type="NCBIfam" id="NF001843">
    <property type="entry name" value="PRK00567.1-4"/>
    <property type="match status" value="1"/>
</dbReference>
<dbReference type="PANTHER" id="PTHR30266:SF2">
    <property type="entry name" value="LARGE-CONDUCTANCE MECHANOSENSITIVE CHANNEL"/>
    <property type="match status" value="1"/>
</dbReference>
<dbReference type="PANTHER" id="PTHR30266">
    <property type="entry name" value="MECHANOSENSITIVE CHANNEL MSCL"/>
    <property type="match status" value="1"/>
</dbReference>
<dbReference type="Pfam" id="PF01741">
    <property type="entry name" value="MscL"/>
    <property type="match status" value="1"/>
</dbReference>
<dbReference type="PRINTS" id="PR01264">
    <property type="entry name" value="MECHCHANNEL"/>
</dbReference>
<dbReference type="SUPFAM" id="SSF81330">
    <property type="entry name" value="Gated mechanosensitive channel"/>
    <property type="match status" value="1"/>
</dbReference>
<dbReference type="PROSITE" id="PS01327">
    <property type="entry name" value="MSCL"/>
    <property type="match status" value="1"/>
</dbReference>
<evidence type="ECO:0000255" key="1">
    <source>
        <dbReference type="HAMAP-Rule" id="MF_00115"/>
    </source>
</evidence>
<name>MSCL_PHOV8</name>
<accession>A6L685</accession>
<proteinExistence type="inferred from homology"/>
<sequence>MGKSSFLQDFKAFAMRGNVIDMAVGVIIGGAFGKIVSSIVADVIMPPIGLLVGGVNFTDLKLQLKPAEVVDGVEKAAVTLNYGNFLQATFDFIIIAFSIFLFIRLLAKLNRKKEEVPAPAAPPAPSKEEVLLTEIRDLLKEQAGKK</sequence>
<keyword id="KW-0997">Cell inner membrane</keyword>
<keyword id="KW-1003">Cell membrane</keyword>
<keyword id="KW-0407">Ion channel</keyword>
<keyword id="KW-0406">Ion transport</keyword>
<keyword id="KW-0472">Membrane</keyword>
<keyword id="KW-0812">Transmembrane</keyword>
<keyword id="KW-1133">Transmembrane helix</keyword>
<keyword id="KW-0813">Transport</keyword>